<accession>A1S4P2</accession>
<reference key="1">
    <citation type="submission" date="2006-12" db="EMBL/GenBank/DDBJ databases">
        <title>Complete sequence of Shewanella amazonensis SB2B.</title>
        <authorList>
            <consortium name="US DOE Joint Genome Institute"/>
            <person name="Copeland A."/>
            <person name="Lucas S."/>
            <person name="Lapidus A."/>
            <person name="Barry K."/>
            <person name="Detter J.C."/>
            <person name="Glavina del Rio T."/>
            <person name="Hammon N."/>
            <person name="Israni S."/>
            <person name="Dalin E."/>
            <person name="Tice H."/>
            <person name="Pitluck S."/>
            <person name="Munk A.C."/>
            <person name="Brettin T."/>
            <person name="Bruce D."/>
            <person name="Han C."/>
            <person name="Tapia R."/>
            <person name="Gilna P."/>
            <person name="Schmutz J."/>
            <person name="Larimer F."/>
            <person name="Land M."/>
            <person name="Hauser L."/>
            <person name="Kyrpides N."/>
            <person name="Mikhailova N."/>
            <person name="Fredrickson J."/>
            <person name="Richardson P."/>
        </authorList>
    </citation>
    <scope>NUCLEOTIDE SEQUENCE [LARGE SCALE GENOMIC DNA]</scope>
    <source>
        <strain>ATCC BAA-1098 / SB2B</strain>
    </source>
</reference>
<sequence length="241" mass="25965">MSTNPKPAFRRILLKLSGEALMGSEGFGIDPSVLDRMAQEIKELVELGIQVGVVIGGGNLFRGEGLAKAGMNRVVGDHMGMLATVMNGLAMRDALHRAYVNARLMSAIPLKGVCDDYNWAEAISLLKSGRVVIFAAGTGNPFCTTDSAACLRGIEIEADVVLKGTKVDGVYSADPMKDPEAVKYDELSYAEVLDKELKVMDLSAFTMARDHDMPILVFNMNKPGALRRVIMGEGEGTIIKK</sequence>
<organism>
    <name type="scientific">Shewanella amazonensis (strain ATCC BAA-1098 / SB2B)</name>
    <dbReference type="NCBI Taxonomy" id="326297"/>
    <lineage>
        <taxon>Bacteria</taxon>
        <taxon>Pseudomonadati</taxon>
        <taxon>Pseudomonadota</taxon>
        <taxon>Gammaproteobacteria</taxon>
        <taxon>Alteromonadales</taxon>
        <taxon>Shewanellaceae</taxon>
        <taxon>Shewanella</taxon>
    </lineage>
</organism>
<dbReference type="EC" id="2.7.4.22" evidence="1"/>
<dbReference type="EMBL" id="CP000507">
    <property type="protein sequence ID" value="ABL99348.1"/>
    <property type="molecule type" value="Genomic_DNA"/>
</dbReference>
<dbReference type="RefSeq" id="WP_011759257.1">
    <property type="nucleotide sequence ID" value="NC_008700.1"/>
</dbReference>
<dbReference type="SMR" id="A1S4P2"/>
<dbReference type="STRING" id="326297.Sama_1141"/>
<dbReference type="KEGG" id="saz:Sama_1141"/>
<dbReference type="eggNOG" id="COG0528">
    <property type="taxonomic scope" value="Bacteria"/>
</dbReference>
<dbReference type="HOGENOM" id="CLU_033861_0_0_6"/>
<dbReference type="OrthoDB" id="9807458at2"/>
<dbReference type="UniPathway" id="UPA00159">
    <property type="reaction ID" value="UER00275"/>
</dbReference>
<dbReference type="Proteomes" id="UP000009175">
    <property type="component" value="Chromosome"/>
</dbReference>
<dbReference type="GO" id="GO:0005829">
    <property type="term" value="C:cytosol"/>
    <property type="evidence" value="ECO:0007669"/>
    <property type="project" value="TreeGrafter"/>
</dbReference>
<dbReference type="GO" id="GO:0005524">
    <property type="term" value="F:ATP binding"/>
    <property type="evidence" value="ECO:0007669"/>
    <property type="project" value="UniProtKB-KW"/>
</dbReference>
<dbReference type="GO" id="GO:0033862">
    <property type="term" value="F:UMP kinase activity"/>
    <property type="evidence" value="ECO:0007669"/>
    <property type="project" value="UniProtKB-EC"/>
</dbReference>
<dbReference type="GO" id="GO:0044210">
    <property type="term" value="P:'de novo' CTP biosynthetic process"/>
    <property type="evidence" value="ECO:0007669"/>
    <property type="project" value="UniProtKB-UniRule"/>
</dbReference>
<dbReference type="GO" id="GO:0006225">
    <property type="term" value="P:UDP biosynthetic process"/>
    <property type="evidence" value="ECO:0007669"/>
    <property type="project" value="TreeGrafter"/>
</dbReference>
<dbReference type="CDD" id="cd04254">
    <property type="entry name" value="AAK_UMPK-PyrH-Ec"/>
    <property type="match status" value="1"/>
</dbReference>
<dbReference type="FunFam" id="3.40.1160.10:FF:000001">
    <property type="entry name" value="Uridylate kinase"/>
    <property type="match status" value="1"/>
</dbReference>
<dbReference type="Gene3D" id="3.40.1160.10">
    <property type="entry name" value="Acetylglutamate kinase-like"/>
    <property type="match status" value="1"/>
</dbReference>
<dbReference type="HAMAP" id="MF_01220_B">
    <property type="entry name" value="PyrH_B"/>
    <property type="match status" value="1"/>
</dbReference>
<dbReference type="InterPro" id="IPR036393">
    <property type="entry name" value="AceGlu_kinase-like_sf"/>
</dbReference>
<dbReference type="InterPro" id="IPR001048">
    <property type="entry name" value="Asp/Glu/Uridylate_kinase"/>
</dbReference>
<dbReference type="InterPro" id="IPR011817">
    <property type="entry name" value="Uridylate_kinase"/>
</dbReference>
<dbReference type="InterPro" id="IPR015963">
    <property type="entry name" value="Uridylate_kinase_bac"/>
</dbReference>
<dbReference type="NCBIfam" id="TIGR02075">
    <property type="entry name" value="pyrH_bact"/>
    <property type="match status" value="1"/>
</dbReference>
<dbReference type="PANTHER" id="PTHR42833">
    <property type="entry name" value="URIDYLATE KINASE"/>
    <property type="match status" value="1"/>
</dbReference>
<dbReference type="PANTHER" id="PTHR42833:SF4">
    <property type="entry name" value="URIDYLATE KINASE PUMPKIN, CHLOROPLASTIC"/>
    <property type="match status" value="1"/>
</dbReference>
<dbReference type="Pfam" id="PF00696">
    <property type="entry name" value="AA_kinase"/>
    <property type="match status" value="1"/>
</dbReference>
<dbReference type="PIRSF" id="PIRSF005650">
    <property type="entry name" value="Uridylate_kin"/>
    <property type="match status" value="1"/>
</dbReference>
<dbReference type="SUPFAM" id="SSF53633">
    <property type="entry name" value="Carbamate kinase-like"/>
    <property type="match status" value="1"/>
</dbReference>
<comment type="function">
    <text evidence="1">Catalyzes the reversible phosphorylation of UMP to UDP.</text>
</comment>
<comment type="catalytic activity">
    <reaction evidence="1">
        <text>UMP + ATP = UDP + ADP</text>
        <dbReference type="Rhea" id="RHEA:24400"/>
        <dbReference type="ChEBI" id="CHEBI:30616"/>
        <dbReference type="ChEBI" id="CHEBI:57865"/>
        <dbReference type="ChEBI" id="CHEBI:58223"/>
        <dbReference type="ChEBI" id="CHEBI:456216"/>
        <dbReference type="EC" id="2.7.4.22"/>
    </reaction>
</comment>
<comment type="activity regulation">
    <text evidence="1">Allosterically activated by GTP. Inhibited by UTP.</text>
</comment>
<comment type="pathway">
    <text evidence="1">Pyrimidine metabolism; CTP biosynthesis via de novo pathway; UDP from UMP (UMPK route): step 1/1.</text>
</comment>
<comment type="subunit">
    <text evidence="1">Homohexamer.</text>
</comment>
<comment type="subcellular location">
    <subcellularLocation>
        <location evidence="1">Cytoplasm</location>
    </subcellularLocation>
</comment>
<comment type="similarity">
    <text evidence="1">Belongs to the UMP kinase family.</text>
</comment>
<name>PYRH_SHEAM</name>
<proteinExistence type="inferred from homology"/>
<protein>
    <recommendedName>
        <fullName evidence="1">Uridylate kinase</fullName>
        <shortName evidence="1">UK</shortName>
        <ecNumber evidence="1">2.7.4.22</ecNumber>
    </recommendedName>
    <alternativeName>
        <fullName evidence="1">Uridine monophosphate kinase</fullName>
        <shortName evidence="1">UMP kinase</shortName>
        <shortName evidence="1">UMPK</shortName>
    </alternativeName>
</protein>
<keyword id="KW-0021">Allosteric enzyme</keyword>
<keyword id="KW-0067">ATP-binding</keyword>
<keyword id="KW-0963">Cytoplasm</keyword>
<keyword id="KW-0418">Kinase</keyword>
<keyword id="KW-0547">Nucleotide-binding</keyword>
<keyword id="KW-0665">Pyrimidine biosynthesis</keyword>
<keyword id="KW-1185">Reference proteome</keyword>
<keyword id="KW-0808">Transferase</keyword>
<gene>
    <name evidence="1" type="primary">pyrH</name>
    <name type="ordered locus">Sama_1141</name>
</gene>
<evidence type="ECO:0000255" key="1">
    <source>
        <dbReference type="HAMAP-Rule" id="MF_01220"/>
    </source>
</evidence>
<feature type="chain" id="PRO_1000054004" description="Uridylate kinase">
    <location>
        <begin position="1"/>
        <end position="241"/>
    </location>
</feature>
<feature type="region of interest" description="Involved in allosteric activation by GTP" evidence="1">
    <location>
        <begin position="23"/>
        <end position="28"/>
    </location>
</feature>
<feature type="binding site" evidence="1">
    <location>
        <begin position="15"/>
        <end position="18"/>
    </location>
    <ligand>
        <name>ATP</name>
        <dbReference type="ChEBI" id="CHEBI:30616"/>
    </ligand>
</feature>
<feature type="binding site" evidence="1">
    <location>
        <position position="57"/>
    </location>
    <ligand>
        <name>UMP</name>
        <dbReference type="ChEBI" id="CHEBI:57865"/>
    </ligand>
</feature>
<feature type="binding site" evidence="1">
    <location>
        <position position="58"/>
    </location>
    <ligand>
        <name>ATP</name>
        <dbReference type="ChEBI" id="CHEBI:30616"/>
    </ligand>
</feature>
<feature type="binding site" evidence="1">
    <location>
        <position position="62"/>
    </location>
    <ligand>
        <name>ATP</name>
        <dbReference type="ChEBI" id="CHEBI:30616"/>
    </ligand>
</feature>
<feature type="binding site" evidence="1">
    <location>
        <position position="77"/>
    </location>
    <ligand>
        <name>UMP</name>
        <dbReference type="ChEBI" id="CHEBI:57865"/>
    </ligand>
</feature>
<feature type="binding site" evidence="1">
    <location>
        <begin position="138"/>
        <end position="145"/>
    </location>
    <ligand>
        <name>UMP</name>
        <dbReference type="ChEBI" id="CHEBI:57865"/>
    </ligand>
</feature>
<feature type="binding site" evidence="1">
    <location>
        <position position="165"/>
    </location>
    <ligand>
        <name>ATP</name>
        <dbReference type="ChEBI" id="CHEBI:30616"/>
    </ligand>
</feature>
<feature type="binding site" evidence="1">
    <location>
        <position position="171"/>
    </location>
    <ligand>
        <name>ATP</name>
        <dbReference type="ChEBI" id="CHEBI:30616"/>
    </ligand>
</feature>
<feature type="binding site" evidence="1">
    <location>
        <position position="174"/>
    </location>
    <ligand>
        <name>ATP</name>
        <dbReference type="ChEBI" id="CHEBI:30616"/>
    </ligand>
</feature>